<organism>
    <name type="scientific">Saccharomyces cerevisiae (strain ATCC 204508 / S288c)</name>
    <name type="common">Baker's yeast</name>
    <dbReference type="NCBI Taxonomy" id="559292"/>
    <lineage>
        <taxon>Eukaryota</taxon>
        <taxon>Fungi</taxon>
        <taxon>Dikarya</taxon>
        <taxon>Ascomycota</taxon>
        <taxon>Saccharomycotina</taxon>
        <taxon>Saccharomycetes</taxon>
        <taxon>Saccharomycetales</taxon>
        <taxon>Saccharomycetaceae</taxon>
        <taxon>Saccharomyces</taxon>
    </lineage>
</organism>
<sequence length="465" mass="51828">MPIKRLDTVVVNTGSQNDQHSASVPPVYLSTTFKVDLNNEDAQNYDYSRSGNPTRSVLQHQIGKLYRVPQENVLAVSSGMTALDVILRGLVLLNGTDNHTPTIIAGDDLYGGTQRLLNFFKQQSHAVSVHVDTSDFEKFKTVFQSLDKVDCVLLESPTNPLCKVVDIPRILRFVKCISPDTTVVVDNTMMSGLNCNPLQLNPGCDVVYESATKYLNGHHDLMGGVIISKTPEIASKLYFVINSTGAGLSPMDSWLLVRGLKTLGVRLYQQQRNAMILAHWLENSCGFKPTRTNKATKTRFVGLRSNPDFKLHKSFNNGPGAVLSFETGSFEHSKRLVSSKKLSIWAVTVSFGCVNSLLSMPCKMSHASIDPELRKERDFPEDLVRLCCGIENIVDLKKDLLAAMVDADIIEVRENGKYLFNKLNKNLAVNTTIDDLHKPLSIYEEFYNQDLIRKDSELNIKSSKL</sequence>
<gene>
    <name type="primary">STR3</name>
    <name type="ordered locus">YGL184C</name>
    <name type="ORF">G1601</name>
</gene>
<comment type="catalytic activity">
    <reaction>
        <text>L,L-cystathionine + H2O = L-homocysteine + pyruvate + NH4(+)</text>
        <dbReference type="Rhea" id="RHEA:13965"/>
        <dbReference type="ChEBI" id="CHEBI:15361"/>
        <dbReference type="ChEBI" id="CHEBI:15377"/>
        <dbReference type="ChEBI" id="CHEBI:28938"/>
        <dbReference type="ChEBI" id="CHEBI:58161"/>
        <dbReference type="ChEBI" id="CHEBI:58199"/>
    </reaction>
</comment>
<comment type="catalytic activity">
    <reaction>
        <text>an S-substituted L-cysteine + H2O = a thiol + pyruvate + NH4(+)</text>
        <dbReference type="Rhea" id="RHEA:18121"/>
        <dbReference type="ChEBI" id="CHEBI:15361"/>
        <dbReference type="ChEBI" id="CHEBI:15377"/>
        <dbReference type="ChEBI" id="CHEBI:28938"/>
        <dbReference type="ChEBI" id="CHEBI:29256"/>
        <dbReference type="ChEBI" id="CHEBI:58717"/>
        <dbReference type="EC" id="4.4.1.13"/>
    </reaction>
</comment>
<comment type="cofactor">
    <cofactor evidence="1">
        <name>pyridoxal 5'-phosphate</name>
        <dbReference type="ChEBI" id="CHEBI:597326"/>
    </cofactor>
</comment>
<comment type="pathway">
    <text>Amino-acid biosynthesis; L-methionine biosynthesis via de novo pathway; L-homocysteine from L-cystathionine: step 1/1.</text>
</comment>
<comment type="subcellular location">
    <subcellularLocation>
        <location evidence="2">Cytoplasm</location>
    </subcellularLocation>
    <subcellularLocation>
        <location evidence="2">Nucleus</location>
    </subcellularLocation>
</comment>
<comment type="similarity">
    <text evidence="3">Belongs to the trans-sulfuration enzymes family.</text>
</comment>
<protein>
    <recommendedName>
        <fullName>Cystathionine beta-lyase</fullName>
        <shortName>CBL</shortName>
        <ecNumber>4.4.1.13</ecNumber>
    </recommendedName>
    <alternativeName>
        <fullName>Beta-cystathionase</fullName>
    </alternativeName>
    <alternativeName>
        <fullName>Cysteine lyase</fullName>
    </alternativeName>
    <alternativeName>
        <fullName>Cysteine-S-conjugate beta-lyase</fullName>
    </alternativeName>
    <alternativeName>
        <fullName>Sulfur transfer protein 3</fullName>
    </alternativeName>
</protein>
<name>STR3_YEAST</name>
<feature type="chain" id="PRO_0000114764" description="Cystathionine beta-lyase">
    <location>
        <begin position="1"/>
        <end position="465"/>
    </location>
</feature>
<feature type="modified residue" description="N6-(pyridoxal phosphate)lysine" evidence="1">
    <location>
        <position position="213"/>
    </location>
</feature>
<evidence type="ECO:0000250" key="1"/>
<evidence type="ECO:0000269" key="2">
    <source>
    </source>
</evidence>
<evidence type="ECO:0000305" key="3"/>
<accession>P53101</accession>
<accession>D6VTX0</accession>
<reference key="1">
    <citation type="journal article" date="1997" name="Yeast">
        <title>Sequencing of a 40.5 kb fragment located on the left arm of chromosome VII from Saccharomyces cerevisiae.</title>
        <authorList>
            <person name="Coglievina M."/>
            <person name="Klima R."/>
            <person name="Bertani I."/>
            <person name="Delneri D."/>
            <person name="Zaccaria P."/>
            <person name="Bruschi C.V."/>
        </authorList>
    </citation>
    <scope>NUCLEOTIDE SEQUENCE [GENOMIC DNA]</scope>
    <source>
        <strain>ATCC 96604 / S288c / FY1679</strain>
    </source>
</reference>
<reference key="2">
    <citation type="journal article" date="1997" name="Nature">
        <title>The nucleotide sequence of Saccharomyces cerevisiae chromosome VII.</title>
        <authorList>
            <person name="Tettelin H."/>
            <person name="Agostoni-Carbone M.L."/>
            <person name="Albermann K."/>
            <person name="Albers M."/>
            <person name="Arroyo J."/>
            <person name="Backes U."/>
            <person name="Barreiros T."/>
            <person name="Bertani I."/>
            <person name="Bjourson A.J."/>
            <person name="Brueckner M."/>
            <person name="Bruschi C.V."/>
            <person name="Carignani G."/>
            <person name="Castagnoli L."/>
            <person name="Cerdan E."/>
            <person name="Clemente M.L."/>
            <person name="Coblenz A."/>
            <person name="Coglievina M."/>
            <person name="Coissac E."/>
            <person name="Defoor E."/>
            <person name="Del Bino S."/>
            <person name="Delius H."/>
            <person name="Delneri D."/>
            <person name="de Wergifosse P."/>
            <person name="Dujon B."/>
            <person name="Durand P."/>
            <person name="Entian K.-D."/>
            <person name="Eraso P."/>
            <person name="Escribano V."/>
            <person name="Fabiani L."/>
            <person name="Fartmann B."/>
            <person name="Feroli F."/>
            <person name="Feuermann M."/>
            <person name="Frontali L."/>
            <person name="Garcia-Gonzalez M."/>
            <person name="Garcia-Saez M.I."/>
            <person name="Goffeau A."/>
            <person name="Guerreiro P."/>
            <person name="Hani J."/>
            <person name="Hansen M."/>
            <person name="Hebling U."/>
            <person name="Hernandez K."/>
            <person name="Heumann K."/>
            <person name="Hilger F."/>
            <person name="Hofmann B."/>
            <person name="Indge K.J."/>
            <person name="James C.M."/>
            <person name="Klima R."/>
            <person name="Koetter P."/>
            <person name="Kramer B."/>
            <person name="Kramer W."/>
            <person name="Lauquin G."/>
            <person name="Leuther H."/>
            <person name="Louis E.J."/>
            <person name="Maillier E."/>
            <person name="Marconi A."/>
            <person name="Martegani E."/>
            <person name="Mazon M.J."/>
            <person name="Mazzoni C."/>
            <person name="McReynolds A.D.K."/>
            <person name="Melchioretto P."/>
            <person name="Mewes H.-W."/>
            <person name="Minenkova O."/>
            <person name="Mueller-Auer S."/>
            <person name="Nawrocki A."/>
            <person name="Netter P."/>
            <person name="Neu R."/>
            <person name="Nombela C."/>
            <person name="Oliver S.G."/>
            <person name="Panzeri L."/>
            <person name="Paoluzi S."/>
            <person name="Plevani P."/>
            <person name="Portetelle D."/>
            <person name="Portillo F."/>
            <person name="Potier S."/>
            <person name="Purnelle B."/>
            <person name="Rieger M."/>
            <person name="Riles L."/>
            <person name="Rinaldi T."/>
            <person name="Robben J."/>
            <person name="Rodrigues-Pousada C."/>
            <person name="Rodriguez-Belmonte E."/>
            <person name="Rodriguez-Torres A.M."/>
            <person name="Rose M."/>
            <person name="Ruzzi M."/>
            <person name="Saliola M."/>
            <person name="Sanchez-Perez M."/>
            <person name="Schaefer B."/>
            <person name="Schaefer M."/>
            <person name="Scharfe M."/>
            <person name="Schmidheini T."/>
            <person name="Schreer A."/>
            <person name="Skala J."/>
            <person name="Souciet J.-L."/>
            <person name="Steensma H.Y."/>
            <person name="Talla E."/>
            <person name="Thierry A."/>
            <person name="Vandenbol M."/>
            <person name="van der Aart Q.J.M."/>
            <person name="Van Dyck L."/>
            <person name="Vanoni M."/>
            <person name="Verhasselt P."/>
            <person name="Voet M."/>
            <person name="Volckaert G."/>
            <person name="Wambutt R."/>
            <person name="Watson M.D."/>
            <person name="Weber N."/>
            <person name="Wedler E."/>
            <person name="Wedler H."/>
            <person name="Wipfli P."/>
            <person name="Wolf K."/>
            <person name="Wright L.F."/>
            <person name="Zaccaria P."/>
            <person name="Zimmermann M."/>
            <person name="Zollner A."/>
            <person name="Kleine K."/>
        </authorList>
    </citation>
    <scope>NUCLEOTIDE SEQUENCE [LARGE SCALE GENOMIC DNA]</scope>
    <source>
        <strain>ATCC 204508 / S288c</strain>
    </source>
</reference>
<reference key="3">
    <citation type="journal article" date="2014" name="G3 (Bethesda)">
        <title>The reference genome sequence of Saccharomyces cerevisiae: Then and now.</title>
        <authorList>
            <person name="Engel S.R."/>
            <person name="Dietrich F.S."/>
            <person name="Fisk D.G."/>
            <person name="Binkley G."/>
            <person name="Balakrishnan R."/>
            <person name="Costanzo M.C."/>
            <person name="Dwight S.S."/>
            <person name="Hitz B.C."/>
            <person name="Karra K."/>
            <person name="Nash R.S."/>
            <person name="Weng S."/>
            <person name="Wong E.D."/>
            <person name="Lloyd P."/>
            <person name="Skrzypek M.S."/>
            <person name="Miyasato S.R."/>
            <person name="Simison M."/>
            <person name="Cherry J.M."/>
        </authorList>
    </citation>
    <scope>GENOME REANNOTATION</scope>
    <source>
        <strain>ATCC 204508 / S288c</strain>
    </source>
</reference>
<reference key="4">
    <citation type="journal article" date="2000" name="Mol. Gen. Genet.">
        <title>Cysteine is essential for transcriptional regulation of the sulfur assimilation genes in Saccharomyces cerevisiae.</title>
        <authorList>
            <person name="Hansen J."/>
            <person name="Johannesen P.F."/>
        </authorList>
    </citation>
    <scope>IDENTIFICATION</scope>
</reference>
<reference key="5">
    <citation type="journal article" date="2003" name="Nature">
        <title>Global analysis of protein localization in budding yeast.</title>
        <authorList>
            <person name="Huh W.-K."/>
            <person name="Falvo J.V."/>
            <person name="Gerke L.C."/>
            <person name="Carroll A.S."/>
            <person name="Howson R.W."/>
            <person name="Weissman J.S."/>
            <person name="O'Shea E.K."/>
        </authorList>
    </citation>
    <scope>SUBCELLULAR LOCATION [LARGE SCALE ANALYSIS]</scope>
</reference>
<dbReference type="EC" id="4.4.1.13"/>
<dbReference type="EMBL" id="X91489">
    <property type="protein sequence ID" value="CAA62790.1"/>
    <property type="molecule type" value="Genomic_DNA"/>
</dbReference>
<dbReference type="EMBL" id="Z72706">
    <property type="protein sequence ID" value="CAA96896.1"/>
    <property type="molecule type" value="Genomic_DNA"/>
</dbReference>
<dbReference type="EMBL" id="BK006941">
    <property type="protein sequence ID" value="DAA07931.1"/>
    <property type="molecule type" value="Genomic_DNA"/>
</dbReference>
<dbReference type="PIR" id="S61133">
    <property type="entry name" value="S61133"/>
</dbReference>
<dbReference type="RefSeq" id="NP_011331.3">
    <property type="nucleotide sequence ID" value="NM_001181049.3"/>
</dbReference>
<dbReference type="SMR" id="P53101"/>
<dbReference type="BioGRID" id="33071">
    <property type="interactions" value="59"/>
</dbReference>
<dbReference type="DIP" id="DIP-4518N"/>
<dbReference type="FunCoup" id="P53101">
    <property type="interactions" value="221"/>
</dbReference>
<dbReference type="IntAct" id="P53101">
    <property type="interactions" value="5"/>
</dbReference>
<dbReference type="STRING" id="4932.YGL184C"/>
<dbReference type="iPTMnet" id="P53101"/>
<dbReference type="PaxDb" id="4932-YGL184C"/>
<dbReference type="PeptideAtlas" id="P53101"/>
<dbReference type="EnsemblFungi" id="YGL184C_mRNA">
    <property type="protein sequence ID" value="YGL184C"/>
    <property type="gene ID" value="YGL184C"/>
</dbReference>
<dbReference type="GeneID" id="852691"/>
<dbReference type="KEGG" id="sce:YGL184C"/>
<dbReference type="AGR" id="SGD:S000003152"/>
<dbReference type="SGD" id="S000003152">
    <property type="gene designation" value="STR3"/>
</dbReference>
<dbReference type="VEuPathDB" id="FungiDB:YGL184C"/>
<dbReference type="eggNOG" id="KOG0053">
    <property type="taxonomic scope" value="Eukaryota"/>
</dbReference>
<dbReference type="HOGENOM" id="CLU_018986_2_1_1"/>
<dbReference type="InParanoid" id="P53101"/>
<dbReference type="OMA" id="NCIGATG"/>
<dbReference type="OrthoDB" id="2545919at2759"/>
<dbReference type="BioCyc" id="MetaCyc:YGL184C-MONOMER"/>
<dbReference type="BioCyc" id="YEAST:YGL184C-MONOMER"/>
<dbReference type="UniPathway" id="UPA00051">
    <property type="reaction ID" value="UER00078"/>
</dbReference>
<dbReference type="BioGRID-ORCS" id="852691">
    <property type="hits" value="1 hit in 10 CRISPR screens"/>
</dbReference>
<dbReference type="PRO" id="PR:P53101"/>
<dbReference type="Proteomes" id="UP000002311">
    <property type="component" value="Chromosome VII"/>
</dbReference>
<dbReference type="RNAct" id="P53101">
    <property type="molecule type" value="protein"/>
</dbReference>
<dbReference type="GO" id="GO:0005737">
    <property type="term" value="C:cytoplasm"/>
    <property type="evidence" value="ECO:0007005"/>
    <property type="project" value="SGD"/>
</dbReference>
<dbReference type="GO" id="GO:0005634">
    <property type="term" value="C:nucleus"/>
    <property type="evidence" value="ECO:0007005"/>
    <property type="project" value="SGD"/>
</dbReference>
<dbReference type="GO" id="GO:0005777">
    <property type="term" value="C:peroxisome"/>
    <property type="evidence" value="ECO:0000314"/>
    <property type="project" value="SGD"/>
</dbReference>
<dbReference type="GO" id="GO:0016846">
    <property type="term" value="F:carbon-sulfur lyase activity"/>
    <property type="evidence" value="ECO:0000318"/>
    <property type="project" value="GO_Central"/>
</dbReference>
<dbReference type="GO" id="GO:0047804">
    <property type="term" value="F:cysteine-S-conjugate beta-lyase activity"/>
    <property type="evidence" value="ECO:0000314"/>
    <property type="project" value="SGD"/>
</dbReference>
<dbReference type="GO" id="GO:0030170">
    <property type="term" value="F:pyridoxal phosphate binding"/>
    <property type="evidence" value="ECO:0000318"/>
    <property type="project" value="GO_Central"/>
</dbReference>
<dbReference type="GO" id="GO:0071266">
    <property type="term" value="P:'de novo' L-methionine biosynthetic process"/>
    <property type="evidence" value="ECO:0007669"/>
    <property type="project" value="InterPro"/>
</dbReference>
<dbReference type="GO" id="GO:0009086">
    <property type="term" value="P:methionine biosynthetic process"/>
    <property type="evidence" value="ECO:0000315"/>
    <property type="project" value="SGD"/>
</dbReference>
<dbReference type="GO" id="GO:0019346">
    <property type="term" value="P:transsulfuration"/>
    <property type="evidence" value="ECO:0000315"/>
    <property type="project" value="SGD"/>
</dbReference>
<dbReference type="FunFam" id="3.40.640.10:FF:000137">
    <property type="entry name" value="Cystathionine beta-lyase"/>
    <property type="match status" value="1"/>
</dbReference>
<dbReference type="FunFam" id="3.90.1150.10:FF:000013">
    <property type="entry name" value="Cystathionine beta-lyase"/>
    <property type="match status" value="1"/>
</dbReference>
<dbReference type="Gene3D" id="3.90.1150.10">
    <property type="entry name" value="Aspartate Aminotransferase, domain 1"/>
    <property type="match status" value="1"/>
</dbReference>
<dbReference type="Gene3D" id="3.40.640.10">
    <property type="entry name" value="Type I PLP-dependent aspartate aminotransferase-like (Major domain)"/>
    <property type="match status" value="1"/>
</dbReference>
<dbReference type="InterPro" id="IPR000277">
    <property type="entry name" value="Cys/Met-Metab_PyrdxlP-dep_enz"/>
</dbReference>
<dbReference type="InterPro" id="IPR006238">
    <property type="entry name" value="Cys_b_lyase_euk"/>
</dbReference>
<dbReference type="InterPro" id="IPR054542">
    <property type="entry name" value="Cys_met_metab_PP"/>
</dbReference>
<dbReference type="InterPro" id="IPR015424">
    <property type="entry name" value="PyrdxlP-dep_Trfase"/>
</dbReference>
<dbReference type="InterPro" id="IPR015421">
    <property type="entry name" value="PyrdxlP-dep_Trfase_major"/>
</dbReference>
<dbReference type="InterPro" id="IPR015422">
    <property type="entry name" value="PyrdxlP-dep_Trfase_small"/>
</dbReference>
<dbReference type="NCBIfam" id="TIGR01329">
    <property type="entry name" value="cysta_beta_ly_E"/>
    <property type="match status" value="1"/>
</dbReference>
<dbReference type="PANTHER" id="PTHR11808:SF50">
    <property type="entry name" value="CYSTATHIONINE BETA-LYASE"/>
    <property type="match status" value="1"/>
</dbReference>
<dbReference type="PANTHER" id="PTHR11808">
    <property type="entry name" value="TRANS-SULFURATION ENZYME FAMILY MEMBER"/>
    <property type="match status" value="1"/>
</dbReference>
<dbReference type="Pfam" id="PF01053">
    <property type="entry name" value="Cys_Met_Meta_PP"/>
    <property type="match status" value="1"/>
</dbReference>
<dbReference type="PIRSF" id="PIRSF001434">
    <property type="entry name" value="CGS"/>
    <property type="match status" value="1"/>
</dbReference>
<dbReference type="SUPFAM" id="SSF53383">
    <property type="entry name" value="PLP-dependent transferases"/>
    <property type="match status" value="1"/>
</dbReference>
<dbReference type="PROSITE" id="PS00868">
    <property type="entry name" value="CYS_MET_METAB_PP"/>
    <property type="match status" value="1"/>
</dbReference>
<proteinExistence type="evidence at protein level"/>
<keyword id="KW-0028">Amino-acid biosynthesis</keyword>
<keyword id="KW-0963">Cytoplasm</keyword>
<keyword id="KW-0456">Lyase</keyword>
<keyword id="KW-0486">Methionine biosynthesis</keyword>
<keyword id="KW-0539">Nucleus</keyword>
<keyword id="KW-0663">Pyridoxal phosphate</keyword>
<keyword id="KW-1185">Reference proteome</keyword>